<comment type="function">
    <text evidence="1">Specifically methylates the N1 position of guanosine-37 in various cytoplasmic and mitochondrial tRNAs. Methylation is not dependent on the nature of the nucleoside 5' of the target nucleoside. This is the first step in the biosynthesis of wybutosine (yW), a modified base adjacent to the anticodon of tRNAs and required for accurate decoding.</text>
</comment>
<comment type="catalytic activity">
    <reaction evidence="1">
        <text>guanosine(37) in tRNA + S-adenosyl-L-methionine = N(1)-methylguanosine(37) in tRNA + S-adenosyl-L-homocysteine + H(+)</text>
        <dbReference type="Rhea" id="RHEA:36899"/>
        <dbReference type="Rhea" id="RHEA-COMP:10145"/>
        <dbReference type="Rhea" id="RHEA-COMP:10147"/>
        <dbReference type="ChEBI" id="CHEBI:15378"/>
        <dbReference type="ChEBI" id="CHEBI:57856"/>
        <dbReference type="ChEBI" id="CHEBI:59789"/>
        <dbReference type="ChEBI" id="CHEBI:73542"/>
        <dbReference type="ChEBI" id="CHEBI:74269"/>
        <dbReference type="EC" id="2.1.1.228"/>
    </reaction>
</comment>
<comment type="subunit">
    <text evidence="1">Monomer.</text>
</comment>
<comment type="subcellular location">
    <subcellularLocation>
        <location evidence="1">Mitochondrion matrix</location>
    </subcellularLocation>
    <subcellularLocation>
        <location evidence="1">Nucleus</location>
    </subcellularLocation>
    <subcellularLocation>
        <location evidence="1">Cytoplasm</location>
    </subcellularLocation>
    <text evidence="1">Predominantly in the mitochondria and in the nucleus.</text>
</comment>
<comment type="similarity">
    <text evidence="2">Belongs to the class I-like SAM-binding methyltransferase superfamily. TRM5/TYW2 family.</text>
</comment>
<dbReference type="EC" id="2.1.1.228" evidence="1"/>
<dbReference type="EMBL" id="DS235281">
    <property type="protein sequence ID" value="EEB14356.1"/>
    <property type="molecule type" value="Genomic_DNA"/>
</dbReference>
<dbReference type="RefSeq" id="XP_002427094.1">
    <property type="nucleotide sequence ID" value="XM_002427049.1"/>
</dbReference>
<dbReference type="SMR" id="E0VLV0"/>
<dbReference type="FunCoup" id="E0VLV0">
    <property type="interactions" value="1053"/>
</dbReference>
<dbReference type="STRING" id="121224.E0VLV0"/>
<dbReference type="EnsemblMetazoa" id="PHUM294360-RA">
    <property type="protein sequence ID" value="PHUM294360-PA"/>
    <property type="gene ID" value="PHUM294360"/>
</dbReference>
<dbReference type="KEGG" id="phu:Phum_PHUM294360"/>
<dbReference type="CTD" id="8229727"/>
<dbReference type="VEuPathDB" id="VectorBase:PHUM294360"/>
<dbReference type="eggNOG" id="KOG2078">
    <property type="taxonomic scope" value="Eukaryota"/>
</dbReference>
<dbReference type="HOGENOM" id="CLU_022610_2_3_1"/>
<dbReference type="InParanoid" id="E0VLV0"/>
<dbReference type="OMA" id="VGSHSQF"/>
<dbReference type="OrthoDB" id="408788at2759"/>
<dbReference type="PhylomeDB" id="E0VLV0"/>
<dbReference type="Proteomes" id="UP000009046">
    <property type="component" value="Unassembled WGS sequence"/>
</dbReference>
<dbReference type="GO" id="GO:0005759">
    <property type="term" value="C:mitochondrial matrix"/>
    <property type="evidence" value="ECO:0007669"/>
    <property type="project" value="UniProtKB-SubCell"/>
</dbReference>
<dbReference type="GO" id="GO:0005634">
    <property type="term" value="C:nucleus"/>
    <property type="evidence" value="ECO:0007669"/>
    <property type="project" value="UniProtKB-SubCell"/>
</dbReference>
<dbReference type="GO" id="GO:0052906">
    <property type="term" value="F:tRNA (guanine(37)-N1)-methyltransferase activity"/>
    <property type="evidence" value="ECO:0007669"/>
    <property type="project" value="UniProtKB-UniRule"/>
</dbReference>
<dbReference type="GO" id="GO:0070901">
    <property type="term" value="P:mitochondrial tRNA methylation"/>
    <property type="evidence" value="ECO:0007669"/>
    <property type="project" value="TreeGrafter"/>
</dbReference>
<dbReference type="GO" id="GO:0002939">
    <property type="term" value="P:tRNA N1-guanine methylation"/>
    <property type="evidence" value="ECO:0007669"/>
    <property type="project" value="TreeGrafter"/>
</dbReference>
<dbReference type="FunFam" id="3.30.300.110:FF:000001">
    <property type="entry name" value="tRNA (guanine(37)-N1)-methyltransferase"/>
    <property type="match status" value="1"/>
</dbReference>
<dbReference type="Gene3D" id="3.30.300.110">
    <property type="entry name" value="Met-10+ protein-like domains"/>
    <property type="match status" value="1"/>
</dbReference>
<dbReference type="Gene3D" id="3.40.50.150">
    <property type="entry name" value="Vaccinia Virus protein VP39"/>
    <property type="match status" value="1"/>
</dbReference>
<dbReference type="HAMAP" id="MF_03152">
    <property type="entry name" value="TRM5"/>
    <property type="match status" value="1"/>
</dbReference>
<dbReference type="InterPro" id="IPR030382">
    <property type="entry name" value="MeTrfase_TRM5/TYW2"/>
</dbReference>
<dbReference type="InterPro" id="IPR029063">
    <property type="entry name" value="SAM-dependent_MTases_sf"/>
</dbReference>
<dbReference type="InterPro" id="IPR056743">
    <property type="entry name" value="TRM5-TYW2-like_MTfase"/>
</dbReference>
<dbReference type="InterPro" id="IPR056744">
    <property type="entry name" value="TRM5/TYW2-like_N"/>
</dbReference>
<dbReference type="InterPro" id="IPR025792">
    <property type="entry name" value="tRNA_Gua_MeTrfase_euk"/>
</dbReference>
<dbReference type="PANTHER" id="PTHR23245:SF36">
    <property type="entry name" value="TRNA (GUANINE(37)-N1)-METHYLTRANSFERASE"/>
    <property type="match status" value="1"/>
</dbReference>
<dbReference type="PANTHER" id="PTHR23245">
    <property type="entry name" value="TRNA METHYLTRANSFERASE"/>
    <property type="match status" value="1"/>
</dbReference>
<dbReference type="Pfam" id="PF02475">
    <property type="entry name" value="TRM5-TYW2_MTfase"/>
    <property type="match status" value="1"/>
</dbReference>
<dbReference type="Pfam" id="PF25133">
    <property type="entry name" value="TYW2_N_2"/>
    <property type="match status" value="1"/>
</dbReference>
<dbReference type="SUPFAM" id="SSF53335">
    <property type="entry name" value="S-adenosyl-L-methionine-dependent methyltransferases"/>
    <property type="match status" value="1"/>
</dbReference>
<dbReference type="PROSITE" id="PS51684">
    <property type="entry name" value="SAM_MT_TRM5_TYW2"/>
    <property type="match status" value="1"/>
</dbReference>
<name>TRM5_PEDHC</name>
<organism>
    <name type="scientific">Pediculus humanus subsp. corporis</name>
    <name type="common">Body louse</name>
    <dbReference type="NCBI Taxonomy" id="121224"/>
    <lineage>
        <taxon>Eukaryota</taxon>
        <taxon>Metazoa</taxon>
        <taxon>Ecdysozoa</taxon>
        <taxon>Arthropoda</taxon>
        <taxon>Hexapoda</taxon>
        <taxon>Insecta</taxon>
        <taxon>Pterygota</taxon>
        <taxon>Neoptera</taxon>
        <taxon>Paraneoptera</taxon>
        <taxon>Psocodea</taxon>
        <taxon>Phthiraptera</taxon>
        <taxon>Anoplura</taxon>
        <taxon>Pediculidae</taxon>
        <taxon>Pediculus</taxon>
    </lineage>
</organism>
<evidence type="ECO:0000255" key="1">
    <source>
        <dbReference type="HAMAP-Rule" id="MF_03152"/>
    </source>
</evidence>
<evidence type="ECO:0000305" key="2"/>
<protein>
    <recommendedName>
        <fullName evidence="1">tRNA (guanine(37)-N(1))-methyltransferase</fullName>
        <ecNumber evidence="1">2.1.1.228</ecNumber>
    </recommendedName>
    <alternativeName>
        <fullName evidence="1">M1G-methyltransferase</fullName>
    </alternativeName>
    <alternativeName>
        <fullName evidence="1">tRNA [GM37] methyltransferase</fullName>
    </alternativeName>
    <alternativeName>
        <fullName evidence="1">tRNA methyltransferase 5 homolog</fullName>
    </alternativeName>
</protein>
<sequence length="463" mass="54197">MKVLDRSAFKKTINVYSIEIKPNQINNLNKCLKNYYFKNRRCKITEEKISDNVKLFLNPALIKNFDDFSENTKIELKNLGITKDMFSNEIITLDYDYWKLNEVLKAILPKDEPPLTSYSIIGHIVHLNLKDHLIDYKYIIAEVLKDKVSVAKTVVNKTNKIDNVYRNFEMEVLCGEPDFIASVIEYDTKFEFDFSKVYWNPRLSTEHNRIVNLVNHGDVLFDVFAGVGPFSIRAAKKNCLVHANDLNPDSFKWLNHNINLNKKAKGWITTYNKDGSDFILNDFKSNMLKIWSDSNFLGQIHVVMNLPAKALSFLKYFKGLFDEQDLKEIKKDHLEKHLPIIYCYFFAKKDESLDEIFKTHLEYKFDENEYEFNFVRNVSNGKNMHRVTFQMPLSILMIDNSDISEPLPKRISKSLKAKTKAKEYTGNLKKIKETLNKNISKIDSDFLKLQNDISKKKEKPDDK</sequence>
<gene>
    <name type="ORF">PHUM294360</name>
</gene>
<reference key="1">
    <citation type="journal article" date="2010" name="Proc. Natl. Acad. Sci. U.S.A.">
        <title>Genome sequences of the human body louse and its primary endosymbiont provide insights into the permanent parasitic lifestyle.</title>
        <authorList>
            <person name="Kirkness E.F."/>
            <person name="Haas B.J."/>
            <person name="Sun W."/>
            <person name="Braig H.R."/>
            <person name="Perotti M.A."/>
            <person name="Clark J.M."/>
            <person name="Lee S.H."/>
            <person name="Robertson H.M."/>
            <person name="Kennedy R.C."/>
            <person name="Elhaik E."/>
            <person name="Gerlach D."/>
            <person name="Kriventseva E.V."/>
            <person name="Elsik C.G."/>
            <person name="Graur D."/>
            <person name="Hill C.A."/>
            <person name="Veenstra J.A."/>
            <person name="Walenz B."/>
            <person name="Tubio J.M."/>
            <person name="Ribeiro J.M."/>
            <person name="Rozas J."/>
            <person name="Johnston J.S."/>
            <person name="Reese J.T."/>
            <person name="Popadic A."/>
            <person name="Tojo M."/>
            <person name="Raoult D."/>
            <person name="Reed D.L."/>
            <person name="Tomoyasu Y."/>
            <person name="Krause E."/>
            <person name="Mittapalli O."/>
            <person name="Margam V.M."/>
            <person name="Li H.M."/>
            <person name="Meyer J.M."/>
            <person name="Johnson R.M."/>
            <person name="Romero-Severson J."/>
            <person name="Vanzee J.P."/>
            <person name="Alvarez-Ponce D."/>
            <person name="Vieira F.G."/>
            <person name="Aguade M."/>
            <person name="Guirao-Rico S."/>
            <person name="Anzola J.M."/>
            <person name="Yoon K.S."/>
            <person name="Strycharz J.P."/>
            <person name="Unger M.F."/>
            <person name="Christley S."/>
            <person name="Lobo N.F."/>
            <person name="Seufferheld M.J."/>
            <person name="Wang N."/>
            <person name="Dasch G.A."/>
            <person name="Struchiner C.J."/>
            <person name="Madey G."/>
            <person name="Hannick L.I."/>
            <person name="Bidwell S."/>
            <person name="Joardar V."/>
            <person name="Caler E."/>
            <person name="Shao R."/>
            <person name="Barker S.C."/>
            <person name="Cameron S."/>
            <person name="Bruggner R.V."/>
            <person name="Regier A."/>
            <person name="Johnson J."/>
            <person name="Viswanathan L."/>
            <person name="Utterback T.R."/>
            <person name="Sutton G.G."/>
            <person name="Lawson D."/>
            <person name="Waterhouse R.M."/>
            <person name="Venter J.C."/>
            <person name="Strausberg R.L."/>
            <person name="Berenbaum M.R."/>
            <person name="Collins F.H."/>
            <person name="Zdobnov E.M."/>
            <person name="Pittendrigh B.R."/>
        </authorList>
    </citation>
    <scope>NUCLEOTIDE SEQUENCE [LARGE SCALE GENOMIC DNA]</scope>
    <source>
        <strain>USDA</strain>
    </source>
</reference>
<accession>E0VLV0</accession>
<proteinExistence type="inferred from homology"/>
<keyword id="KW-0963">Cytoplasm</keyword>
<keyword id="KW-0489">Methyltransferase</keyword>
<keyword id="KW-0496">Mitochondrion</keyword>
<keyword id="KW-0539">Nucleus</keyword>
<keyword id="KW-1185">Reference proteome</keyword>
<keyword id="KW-0949">S-adenosyl-L-methionine</keyword>
<keyword id="KW-0808">Transferase</keyword>
<keyword id="KW-0819">tRNA processing</keyword>
<feature type="chain" id="PRO_0000414131" description="tRNA (guanine(37)-N(1))-methyltransferase">
    <location>
        <begin position="1"/>
        <end position="463"/>
    </location>
</feature>
<feature type="binding site" evidence="1">
    <location>
        <position position="207"/>
    </location>
    <ligand>
        <name>S-adenosyl-L-methionine</name>
        <dbReference type="ChEBI" id="CHEBI:59789"/>
    </ligand>
</feature>
<feature type="binding site" evidence="1">
    <location>
        <begin position="245"/>
        <end position="246"/>
    </location>
    <ligand>
        <name>S-adenosyl-L-methionine</name>
        <dbReference type="ChEBI" id="CHEBI:59789"/>
    </ligand>
</feature>
<feature type="binding site" evidence="1">
    <location>
        <begin position="274"/>
        <end position="275"/>
    </location>
    <ligand>
        <name>S-adenosyl-L-methionine</name>
        <dbReference type="ChEBI" id="CHEBI:59789"/>
    </ligand>
</feature>
<feature type="binding site" evidence="1">
    <location>
        <position position="305"/>
    </location>
    <ligand>
        <name>S-adenosyl-L-methionine</name>
        <dbReference type="ChEBI" id="CHEBI:59789"/>
    </ligand>
</feature>